<keyword id="KW-0112">Calmodulin-binding</keyword>
<keyword id="KW-1003">Cell membrane</keyword>
<keyword id="KW-0966">Cell projection</keyword>
<keyword id="KW-0963">Cytoplasm</keyword>
<keyword id="KW-0217">Developmental protein</keyword>
<keyword id="KW-0221">Differentiation</keyword>
<keyword id="KW-0341">Growth regulation</keyword>
<keyword id="KW-0449">Lipoprotein</keyword>
<keyword id="KW-0472">Membrane</keyword>
<keyword id="KW-0524">Neurogenesis</keyword>
<keyword id="KW-0564">Palmitate</keyword>
<keyword id="KW-0597">Phosphoprotein</keyword>
<keyword id="KW-1185">Reference proteome</keyword>
<keyword id="KW-0770">Synapse</keyword>
<comment type="function">
    <text evidence="4">This protein is associated with nerve growth. It is a major component of the motile 'growth cones' that form the tips of elongating axons. Plays a role in axonal and dendritic filopodia induction (By similarity).</text>
</comment>
<comment type="subunit">
    <text evidence="1 2">Identified in a complex containing FGFR4, NCAM1, CDH2, PLCG1, FRS2, SRC, SHC1, GAP43 and CTTN (By similarity). Interacts (via IQ domain) with calmodulin (By similarity). Binds calmodulin with a greater affinity in the absence of Ca(2+) than in its presence (By similarity).</text>
</comment>
<comment type="subcellular location">
    <subcellularLocation>
        <location evidence="4">Cell membrane</location>
        <topology evidence="4">Peripheral membrane protein</topology>
        <orientation evidence="4">Cytoplasmic side</orientation>
    </subcellularLocation>
    <subcellularLocation>
        <location evidence="4">Cell projection</location>
        <location evidence="4">Growth cone membrane</location>
        <topology evidence="4">Peripheral membrane protein</topology>
        <orientation evidence="4">Cytoplasmic side</orientation>
    </subcellularLocation>
    <subcellularLocation>
        <location evidence="4">Synapse</location>
    </subcellularLocation>
    <subcellularLocation>
        <location evidence="4">Cell projection</location>
        <location evidence="4">Filopodium membrane</location>
        <topology evidence="4">Peripheral membrane protein</topology>
    </subcellularLocation>
    <subcellularLocation>
        <location evidence="3">Perikaryon</location>
    </subcellularLocation>
    <subcellularLocation>
        <location evidence="3">Cell projection</location>
        <location evidence="3">Dendrite</location>
    </subcellularLocation>
    <subcellularLocation>
        <location evidence="3">Cell projection</location>
        <location evidence="3">Axon</location>
    </subcellularLocation>
    <subcellularLocation>
        <location evidence="3">Cytoplasm</location>
    </subcellularLocation>
    <text evidence="4">Cytoplasmic surface of growth cone and synaptic plasma membranes.</text>
</comment>
<comment type="PTM">
    <text evidence="3">Phosphorylated (By similarity). Phosphorylation of this protein by a protein kinase C is specifically correlated with certain forms of synaptic plasticity (By similarity).</text>
</comment>
<comment type="PTM">
    <text evidence="2 4">Palmitoylated by ZDHHC3 (By similarity). Palmitoylation is regulated by ARF6 and is essential for plasma membrane association and axonal and dendritic filopodia induction. Deacylated by LYPLA2 (By similarity).</text>
</comment>
<comment type="similarity">
    <text evidence="7">Belongs to the neuromodulin family.</text>
</comment>
<reference key="1">
    <citation type="submission" date="2003-11" db="EMBL/GenBank/DDBJ databases">
        <title>Gap43 in cat visual cortex.</title>
        <authorList>
            <person name="Weiler E."/>
        </authorList>
    </citation>
    <scope>NUCLEOTIDE SEQUENCE [MRNA]</scope>
    <source>
        <tissue>Visual cortex</tissue>
    </source>
</reference>
<evidence type="ECO:0000250" key="1">
    <source>
        <dbReference type="UniProtKB" id="P06836"/>
    </source>
</evidence>
<evidence type="ECO:0000250" key="2">
    <source>
        <dbReference type="UniProtKB" id="P06837"/>
    </source>
</evidence>
<evidence type="ECO:0000250" key="3">
    <source>
        <dbReference type="UniProtKB" id="P07936"/>
    </source>
</evidence>
<evidence type="ECO:0000250" key="4">
    <source>
        <dbReference type="UniProtKB" id="P17677"/>
    </source>
</evidence>
<evidence type="ECO:0000255" key="5">
    <source>
        <dbReference type="PROSITE-ProRule" id="PRU00116"/>
    </source>
</evidence>
<evidence type="ECO:0000256" key="6">
    <source>
        <dbReference type="SAM" id="MobiDB-lite"/>
    </source>
</evidence>
<evidence type="ECO:0000305" key="7"/>
<protein>
    <recommendedName>
        <fullName>Neuromodulin</fullName>
    </recommendedName>
    <alternativeName>
        <fullName>Axonal membrane protein GAP-43</fullName>
    </alternativeName>
    <alternativeName>
        <fullName>Growth-associated protein 43</fullName>
    </alternativeName>
</protein>
<organism>
    <name type="scientific">Felis catus</name>
    <name type="common">Cat</name>
    <name type="synonym">Felis silvestris catus</name>
    <dbReference type="NCBI Taxonomy" id="9685"/>
    <lineage>
        <taxon>Eukaryota</taxon>
        <taxon>Metazoa</taxon>
        <taxon>Chordata</taxon>
        <taxon>Craniata</taxon>
        <taxon>Vertebrata</taxon>
        <taxon>Euteleostomi</taxon>
        <taxon>Mammalia</taxon>
        <taxon>Eutheria</taxon>
        <taxon>Laurasiatheria</taxon>
        <taxon>Carnivora</taxon>
        <taxon>Feliformia</taxon>
        <taxon>Felidae</taxon>
        <taxon>Felinae</taxon>
        <taxon>Felis</taxon>
    </lineage>
</organism>
<feature type="chain" id="PRO_0000226731" description="Neuromodulin">
    <location>
        <begin position="1"/>
        <end position="242"/>
    </location>
</feature>
<feature type="domain" description="IQ" evidence="5">
    <location>
        <begin position="31"/>
        <end position="60"/>
    </location>
</feature>
<feature type="region of interest" description="Disordered" evidence="6">
    <location>
        <begin position="1"/>
        <end position="242"/>
    </location>
</feature>
<feature type="compositionally biased region" description="Basic and acidic residues" evidence="6">
    <location>
        <begin position="9"/>
        <end position="32"/>
    </location>
</feature>
<feature type="compositionally biased region" description="Basic and acidic residues" evidence="6">
    <location>
        <begin position="66"/>
        <end position="84"/>
    </location>
</feature>
<feature type="compositionally biased region" description="Basic and acidic residues" evidence="6">
    <location>
        <begin position="98"/>
        <end position="117"/>
    </location>
</feature>
<feature type="compositionally biased region" description="Polar residues" evidence="6">
    <location>
        <begin position="142"/>
        <end position="157"/>
    </location>
</feature>
<feature type="compositionally biased region" description="Basic and acidic residues" evidence="6">
    <location>
        <begin position="158"/>
        <end position="170"/>
    </location>
</feature>
<feature type="compositionally biased region" description="Low complexity" evidence="6">
    <location>
        <begin position="171"/>
        <end position="203"/>
    </location>
</feature>
<feature type="compositionally biased region" description="Basic and acidic residues" evidence="6">
    <location>
        <begin position="209"/>
        <end position="242"/>
    </location>
</feature>
<feature type="modified residue" description="Phosphoserine; by PHK and PKC" evidence="1">
    <location>
        <position position="41"/>
    </location>
</feature>
<feature type="modified residue" description="Phosphoserine" evidence="2">
    <location>
        <position position="154"/>
    </location>
</feature>
<feature type="modified residue" description="Phosphoserine" evidence="2">
    <location>
        <position position="156"/>
    </location>
</feature>
<feature type="modified residue" description="Phosphoserine" evidence="2">
    <location>
        <position position="157"/>
    </location>
</feature>
<feature type="modified residue" description="Phosphothreonine" evidence="2">
    <location>
        <position position="185"/>
    </location>
</feature>
<feature type="modified residue" description="Phosphoserine; by CK2" evidence="1">
    <location>
        <position position="206"/>
    </location>
</feature>
<feature type="modified residue" description="Phosphoserine; by CK2" evidence="1">
    <location>
        <position position="207"/>
    </location>
</feature>
<feature type="lipid moiety-binding region" description="S-palmitoyl cysteine" evidence="1">
    <location>
        <position position="3"/>
    </location>
</feature>
<feature type="lipid moiety-binding region" description="S-palmitoyl cysteine" evidence="1">
    <location>
        <position position="4"/>
    </location>
</feature>
<accession>Q6S9D9</accession>
<name>NEUM_FELCA</name>
<dbReference type="EMBL" id="AY462113">
    <property type="protein sequence ID" value="AAR24462.1"/>
    <property type="molecule type" value="mRNA"/>
</dbReference>
<dbReference type="RefSeq" id="NP_001009303.1">
    <property type="nucleotide sequence ID" value="NM_001009303.1"/>
</dbReference>
<dbReference type="SMR" id="Q6S9D9"/>
<dbReference type="STRING" id="9685.ENSFCAP00000026410"/>
<dbReference type="PaxDb" id="9685-ENSFCAP00000003985"/>
<dbReference type="Ensembl" id="ENSFCAT00000047787.3">
    <property type="protein sequence ID" value="ENSFCAP00000026410.1"/>
    <property type="gene ID" value="ENSFCAG00000037548.3"/>
</dbReference>
<dbReference type="GeneID" id="493873"/>
<dbReference type="KEGG" id="fca:493873"/>
<dbReference type="CTD" id="2596"/>
<dbReference type="eggNOG" id="ENOG502RXWF">
    <property type="taxonomic scope" value="Eukaryota"/>
</dbReference>
<dbReference type="GeneTree" id="ENSGT00730000111265"/>
<dbReference type="InParanoid" id="Q6S9D9"/>
<dbReference type="OMA" id="TNQAKTP"/>
<dbReference type="OrthoDB" id="9397439at2759"/>
<dbReference type="TreeFam" id="TF333213"/>
<dbReference type="Proteomes" id="UP000011712">
    <property type="component" value="Chromosome C2"/>
</dbReference>
<dbReference type="Bgee" id="ENSFCAG00000037548">
    <property type="expression patterns" value="Expressed in prefrontal cortex and 9 other cell types or tissues"/>
</dbReference>
<dbReference type="GO" id="GO:0005737">
    <property type="term" value="C:cytoplasm"/>
    <property type="evidence" value="ECO:0000318"/>
    <property type="project" value="GO_Central"/>
</dbReference>
<dbReference type="GO" id="GO:0030425">
    <property type="term" value="C:dendrite"/>
    <property type="evidence" value="ECO:0007669"/>
    <property type="project" value="UniProtKB-SubCell"/>
</dbReference>
<dbReference type="GO" id="GO:0031527">
    <property type="term" value="C:filopodium membrane"/>
    <property type="evidence" value="ECO:0007669"/>
    <property type="project" value="UniProtKB-SubCell"/>
</dbReference>
<dbReference type="GO" id="GO:0032584">
    <property type="term" value="C:growth cone membrane"/>
    <property type="evidence" value="ECO:0007669"/>
    <property type="project" value="UniProtKB-SubCell"/>
</dbReference>
<dbReference type="GO" id="GO:0043204">
    <property type="term" value="C:perikaryon"/>
    <property type="evidence" value="ECO:0007669"/>
    <property type="project" value="UniProtKB-SubCell"/>
</dbReference>
<dbReference type="GO" id="GO:0005886">
    <property type="term" value="C:plasma membrane"/>
    <property type="evidence" value="ECO:0000318"/>
    <property type="project" value="GO_Central"/>
</dbReference>
<dbReference type="GO" id="GO:0014069">
    <property type="term" value="C:postsynaptic density"/>
    <property type="evidence" value="ECO:0000318"/>
    <property type="project" value="GO_Central"/>
</dbReference>
<dbReference type="GO" id="GO:0005516">
    <property type="term" value="F:calmodulin binding"/>
    <property type="evidence" value="ECO:0000318"/>
    <property type="project" value="GO_Central"/>
</dbReference>
<dbReference type="GO" id="GO:0035727">
    <property type="term" value="F:lysophosphatidic acid binding"/>
    <property type="evidence" value="ECO:0000318"/>
    <property type="project" value="GO_Central"/>
</dbReference>
<dbReference type="GO" id="GO:1901981">
    <property type="term" value="F:phosphatidylinositol phosphate binding"/>
    <property type="evidence" value="ECO:0000318"/>
    <property type="project" value="GO_Central"/>
</dbReference>
<dbReference type="GO" id="GO:0001786">
    <property type="term" value="F:phosphatidylserine binding"/>
    <property type="evidence" value="ECO:0000318"/>
    <property type="project" value="GO_Central"/>
</dbReference>
<dbReference type="GO" id="GO:0016198">
    <property type="term" value="P:axon choice point recognition"/>
    <property type="evidence" value="ECO:0000318"/>
    <property type="project" value="GO_Central"/>
</dbReference>
<dbReference type="GO" id="GO:0031103">
    <property type="term" value="P:axon regeneration"/>
    <property type="evidence" value="ECO:0000318"/>
    <property type="project" value="GO_Central"/>
</dbReference>
<dbReference type="GO" id="GO:0040008">
    <property type="term" value="P:regulation of growth"/>
    <property type="evidence" value="ECO:0007669"/>
    <property type="project" value="InterPro"/>
</dbReference>
<dbReference type="GO" id="GO:0042246">
    <property type="term" value="P:tissue regeneration"/>
    <property type="evidence" value="ECO:0000318"/>
    <property type="project" value="GO_Central"/>
</dbReference>
<dbReference type="CDD" id="cd23767">
    <property type="entry name" value="IQCD"/>
    <property type="match status" value="1"/>
</dbReference>
<dbReference type="FunFam" id="1.20.5.190:FF:000075">
    <property type="entry name" value="Neuromodulin"/>
    <property type="match status" value="1"/>
</dbReference>
<dbReference type="Gene3D" id="1.20.5.190">
    <property type="match status" value="1"/>
</dbReference>
<dbReference type="InterPro" id="IPR000048">
    <property type="entry name" value="IQ_motif_EF-hand-BS"/>
</dbReference>
<dbReference type="InterPro" id="IPR001422">
    <property type="entry name" value="Neuromodulin"/>
</dbReference>
<dbReference type="InterPro" id="IPR017454">
    <property type="entry name" value="Neuromodulin_C"/>
</dbReference>
<dbReference type="InterPro" id="IPR018947">
    <property type="entry name" value="Neuromodulin_gap-junction_N"/>
</dbReference>
<dbReference type="InterPro" id="IPR033137">
    <property type="entry name" value="Neuromodulin_P_site"/>
</dbReference>
<dbReference type="InterPro" id="IPR018243">
    <property type="entry name" value="Neuromodulin_palmitoyl_site"/>
</dbReference>
<dbReference type="PANTHER" id="PTHR10699">
    <property type="entry name" value="NEUROMODULIN"/>
    <property type="match status" value="1"/>
</dbReference>
<dbReference type="PANTHER" id="PTHR10699:SF15">
    <property type="entry name" value="NEUROMODULIN"/>
    <property type="match status" value="1"/>
</dbReference>
<dbReference type="Pfam" id="PF00612">
    <property type="entry name" value="IQ"/>
    <property type="match status" value="1"/>
</dbReference>
<dbReference type="Pfam" id="PF06614">
    <property type="entry name" value="Neuromodulin"/>
    <property type="match status" value="1"/>
</dbReference>
<dbReference type="Pfam" id="PF10580">
    <property type="entry name" value="Neuromodulin_N"/>
    <property type="match status" value="1"/>
</dbReference>
<dbReference type="PRINTS" id="PR00215">
    <property type="entry name" value="NEUROMODULIN"/>
</dbReference>
<dbReference type="SMART" id="SM00015">
    <property type="entry name" value="IQ"/>
    <property type="match status" value="1"/>
</dbReference>
<dbReference type="PROSITE" id="PS50096">
    <property type="entry name" value="IQ"/>
    <property type="match status" value="1"/>
</dbReference>
<dbReference type="PROSITE" id="PS00412">
    <property type="entry name" value="NEUROMODULIN_1"/>
    <property type="match status" value="1"/>
</dbReference>
<dbReference type="PROSITE" id="PS00413">
    <property type="entry name" value="NEUROMODULIN_2"/>
    <property type="match status" value="1"/>
</dbReference>
<gene>
    <name type="primary">GAP43</name>
</gene>
<sequence>MLCCMRRTKQVEKNDEDQKIEQDGIKPEDKAHKAATKIQASFRGHITRKKLKGEKKGDAQAAEAEGNEKDEAPVADGVEKKEGEGPTPTDGAPASGPKAEETGKAGETPSEEKKGEGTPDAATEQAAPQAPVPSEEKAGSAETESATKASTDNSPSSKAEDAPAKEEPKQADVPAAVTAAAAATTPAAEDAAAKATAQPPTDAVESSQAEEKIEAVDETKPKESARQDEGKGEEREADQEHA</sequence>
<proteinExistence type="evidence at transcript level"/>